<protein>
    <recommendedName>
        <fullName evidence="1">Sulfate adenylyltransferase subunit 2</fullName>
        <ecNumber evidence="1">2.7.7.4</ecNumber>
    </recommendedName>
    <alternativeName>
        <fullName evidence="1">ATP-sulfurylase small subunit</fullName>
    </alternativeName>
    <alternativeName>
        <fullName evidence="1">Sulfate adenylate transferase</fullName>
        <shortName evidence="1">SAT</shortName>
    </alternativeName>
</protein>
<organism>
    <name type="scientific">Bacteroides thetaiotaomicron (strain ATCC 29148 / DSM 2079 / JCM 5827 / CCUG 10774 / NCTC 10582 / VPI-5482 / E50)</name>
    <dbReference type="NCBI Taxonomy" id="226186"/>
    <lineage>
        <taxon>Bacteria</taxon>
        <taxon>Pseudomonadati</taxon>
        <taxon>Bacteroidota</taxon>
        <taxon>Bacteroidia</taxon>
        <taxon>Bacteroidales</taxon>
        <taxon>Bacteroidaceae</taxon>
        <taxon>Bacteroides</taxon>
    </lineage>
</organism>
<comment type="function">
    <text evidence="1">With CysN forms the ATP sulfurylase (ATPS) that catalyzes the adenylation of sulfate producing adenosine 5'-phosphosulfate (APS) and diphosphate, the first enzymatic step in sulfur assimilation pathway. APS synthesis involves the formation of a high-energy phosphoric-sulfuric acid anhydride bond driven by GTP hydrolysis by CysN coupled to ATP hydrolysis by CysD.</text>
</comment>
<comment type="catalytic activity">
    <reaction evidence="1">
        <text>sulfate + ATP + H(+) = adenosine 5'-phosphosulfate + diphosphate</text>
        <dbReference type="Rhea" id="RHEA:18133"/>
        <dbReference type="ChEBI" id="CHEBI:15378"/>
        <dbReference type="ChEBI" id="CHEBI:16189"/>
        <dbReference type="ChEBI" id="CHEBI:30616"/>
        <dbReference type="ChEBI" id="CHEBI:33019"/>
        <dbReference type="ChEBI" id="CHEBI:58243"/>
        <dbReference type="EC" id="2.7.7.4"/>
    </reaction>
</comment>
<comment type="pathway">
    <text evidence="1">Sulfur metabolism; hydrogen sulfide biosynthesis; sulfite from sulfate: step 1/3.</text>
</comment>
<comment type="subunit">
    <text evidence="1">Heterodimer composed of CysD, the smaller subunit, and CysN.</text>
</comment>
<comment type="similarity">
    <text evidence="1">Belongs to the PAPS reductase family. CysD subfamily.</text>
</comment>
<sequence length="302" mass="35520">MEEYKLSHLKELEAESIHIIREVAAEFENPVMLYSIGKDSSVMVRLAEKAFYPGKVPFPLMHIDSKWKFKEMIQFRDEYAKKHGWNLIVESNMEAFHAGVGPFTHGSKVHTDLMKTQALLHALDKYKFDAAFGGARRDEEKSRAKERIFSFRDKFHQWDPKNQRPELWDIYNARVHKGESIRVFPISNWTELDIWQYIRLENIPIVPLYYAKERPVINLDGNIIMADDDRLPEKYRDQIEMKMVRFRTLGCWPLTGAVESGAATIEEIVEEMMTTTKSERTTRVIDFDQEGSMEQKKREGYF</sequence>
<accession>Q8AAQ0</accession>
<proteinExistence type="inferred from homology"/>
<gene>
    <name evidence="1" type="primary">cysD</name>
    <name type="ordered locus">BT_0414</name>
</gene>
<keyword id="KW-0067">ATP-binding</keyword>
<keyword id="KW-0547">Nucleotide-binding</keyword>
<keyword id="KW-0548">Nucleotidyltransferase</keyword>
<keyword id="KW-1185">Reference proteome</keyword>
<keyword id="KW-0808">Transferase</keyword>
<evidence type="ECO:0000255" key="1">
    <source>
        <dbReference type="HAMAP-Rule" id="MF_00064"/>
    </source>
</evidence>
<reference key="1">
    <citation type="journal article" date="2003" name="Science">
        <title>A genomic view of the human-Bacteroides thetaiotaomicron symbiosis.</title>
        <authorList>
            <person name="Xu J."/>
            <person name="Bjursell M.K."/>
            <person name="Himrod J."/>
            <person name="Deng S."/>
            <person name="Carmichael L.K."/>
            <person name="Chiang H.C."/>
            <person name="Hooper L.V."/>
            <person name="Gordon J.I."/>
        </authorList>
    </citation>
    <scope>NUCLEOTIDE SEQUENCE [LARGE SCALE GENOMIC DNA]</scope>
    <source>
        <strain>ATCC 29148 / DSM 2079 / JCM 5827 / CCUG 10774 / NCTC 10582 / VPI-5482 / E50</strain>
    </source>
</reference>
<dbReference type="EC" id="2.7.7.4" evidence="1"/>
<dbReference type="EMBL" id="AE015928">
    <property type="protein sequence ID" value="AAO75521.1"/>
    <property type="molecule type" value="Genomic_DNA"/>
</dbReference>
<dbReference type="RefSeq" id="NP_809327.1">
    <property type="nucleotide sequence ID" value="NC_004663.1"/>
</dbReference>
<dbReference type="RefSeq" id="WP_008760694.1">
    <property type="nucleotide sequence ID" value="NC_004663.1"/>
</dbReference>
<dbReference type="SMR" id="Q8AAQ0"/>
<dbReference type="FunCoup" id="Q8AAQ0">
    <property type="interactions" value="92"/>
</dbReference>
<dbReference type="STRING" id="226186.BT_0414"/>
<dbReference type="PaxDb" id="226186-BT_0414"/>
<dbReference type="EnsemblBacteria" id="AAO75521">
    <property type="protein sequence ID" value="AAO75521"/>
    <property type="gene ID" value="BT_0414"/>
</dbReference>
<dbReference type="GeneID" id="60926372"/>
<dbReference type="KEGG" id="bth:BT_0414"/>
<dbReference type="PATRIC" id="fig|226186.12.peg.411"/>
<dbReference type="eggNOG" id="COG0175">
    <property type="taxonomic scope" value="Bacteria"/>
</dbReference>
<dbReference type="HOGENOM" id="CLU_043026_0_0_10"/>
<dbReference type="InParanoid" id="Q8AAQ0"/>
<dbReference type="OrthoDB" id="9772604at2"/>
<dbReference type="UniPathway" id="UPA00140">
    <property type="reaction ID" value="UER00204"/>
</dbReference>
<dbReference type="Proteomes" id="UP000001414">
    <property type="component" value="Chromosome"/>
</dbReference>
<dbReference type="GO" id="GO:0005524">
    <property type="term" value="F:ATP binding"/>
    <property type="evidence" value="ECO:0007669"/>
    <property type="project" value="UniProtKB-KW"/>
</dbReference>
<dbReference type="GO" id="GO:0004781">
    <property type="term" value="F:sulfate adenylyltransferase (ATP) activity"/>
    <property type="evidence" value="ECO:0007669"/>
    <property type="project" value="UniProtKB-UniRule"/>
</dbReference>
<dbReference type="GO" id="GO:0070814">
    <property type="term" value="P:hydrogen sulfide biosynthetic process"/>
    <property type="evidence" value="ECO:0007669"/>
    <property type="project" value="UniProtKB-UniRule"/>
</dbReference>
<dbReference type="GO" id="GO:0000103">
    <property type="term" value="P:sulfate assimilation"/>
    <property type="evidence" value="ECO:0007669"/>
    <property type="project" value="UniProtKB-UniRule"/>
</dbReference>
<dbReference type="CDD" id="cd23946">
    <property type="entry name" value="Sulfate_adenylyltransferase_2"/>
    <property type="match status" value="1"/>
</dbReference>
<dbReference type="FunFam" id="3.40.50.620:FF:000002">
    <property type="entry name" value="Sulfate adenylyltransferase subunit 2"/>
    <property type="match status" value="1"/>
</dbReference>
<dbReference type="Gene3D" id="3.40.50.620">
    <property type="entry name" value="HUPs"/>
    <property type="match status" value="1"/>
</dbReference>
<dbReference type="HAMAP" id="MF_00064">
    <property type="entry name" value="Sulf_adenylyltr_sub2"/>
    <property type="match status" value="1"/>
</dbReference>
<dbReference type="InterPro" id="IPR002500">
    <property type="entry name" value="PAPS_reduct_dom"/>
</dbReference>
<dbReference type="InterPro" id="IPR014729">
    <property type="entry name" value="Rossmann-like_a/b/a_fold"/>
</dbReference>
<dbReference type="InterPro" id="IPR011784">
    <property type="entry name" value="SO4_adenylTrfase_ssu"/>
</dbReference>
<dbReference type="InterPro" id="IPR050128">
    <property type="entry name" value="Sulfate_adenylyltrnsfr_sub2"/>
</dbReference>
<dbReference type="NCBIfam" id="TIGR02039">
    <property type="entry name" value="CysD"/>
    <property type="match status" value="1"/>
</dbReference>
<dbReference type="NCBIfam" id="NF003587">
    <property type="entry name" value="PRK05253.1"/>
    <property type="match status" value="1"/>
</dbReference>
<dbReference type="NCBIfam" id="NF009214">
    <property type="entry name" value="PRK12563.1"/>
    <property type="match status" value="1"/>
</dbReference>
<dbReference type="PANTHER" id="PTHR43196">
    <property type="entry name" value="SULFATE ADENYLYLTRANSFERASE SUBUNIT 2"/>
    <property type="match status" value="1"/>
</dbReference>
<dbReference type="PANTHER" id="PTHR43196:SF1">
    <property type="entry name" value="SULFATE ADENYLYLTRANSFERASE SUBUNIT 2"/>
    <property type="match status" value="1"/>
</dbReference>
<dbReference type="Pfam" id="PF01507">
    <property type="entry name" value="PAPS_reduct"/>
    <property type="match status" value="1"/>
</dbReference>
<dbReference type="PIRSF" id="PIRSF002936">
    <property type="entry name" value="CysDAde_trans"/>
    <property type="match status" value="1"/>
</dbReference>
<dbReference type="SUPFAM" id="SSF52402">
    <property type="entry name" value="Adenine nucleotide alpha hydrolases-like"/>
    <property type="match status" value="1"/>
</dbReference>
<name>CYSD_BACTN</name>
<feature type="chain" id="PRO_1000092199" description="Sulfate adenylyltransferase subunit 2">
    <location>
        <begin position="1"/>
        <end position="302"/>
    </location>
</feature>